<evidence type="ECO:0000255" key="1">
    <source>
        <dbReference type="HAMAP-Rule" id="MF_00089"/>
    </source>
</evidence>
<evidence type="ECO:0000256" key="2">
    <source>
        <dbReference type="SAM" id="MobiDB-lite"/>
    </source>
</evidence>
<organism>
    <name type="scientific">Pseudomonas aeruginosa (strain UCBPP-PA14)</name>
    <dbReference type="NCBI Taxonomy" id="208963"/>
    <lineage>
        <taxon>Bacteria</taxon>
        <taxon>Pseudomonadati</taxon>
        <taxon>Pseudomonadota</taxon>
        <taxon>Gammaproteobacteria</taxon>
        <taxon>Pseudomonadales</taxon>
        <taxon>Pseudomonadaceae</taxon>
        <taxon>Pseudomonas</taxon>
    </lineage>
</organism>
<dbReference type="EC" id="4.1.99.17" evidence="1"/>
<dbReference type="EMBL" id="CP000438">
    <property type="protein sequence ID" value="ABJ14357.1"/>
    <property type="molecule type" value="Genomic_DNA"/>
</dbReference>
<dbReference type="RefSeq" id="WP_003135615.1">
    <property type="nucleotide sequence ID" value="NZ_CP034244.1"/>
</dbReference>
<dbReference type="SMR" id="Q02F45"/>
<dbReference type="KEGG" id="pau:PA14_65740"/>
<dbReference type="PseudoCAP" id="PA14_65740"/>
<dbReference type="HOGENOM" id="CLU_013181_2_1_6"/>
<dbReference type="BioCyc" id="PAER208963:G1G74-5549-MONOMER"/>
<dbReference type="UniPathway" id="UPA00060"/>
<dbReference type="Proteomes" id="UP000000653">
    <property type="component" value="Chromosome"/>
</dbReference>
<dbReference type="GO" id="GO:0005829">
    <property type="term" value="C:cytosol"/>
    <property type="evidence" value="ECO:0007669"/>
    <property type="project" value="TreeGrafter"/>
</dbReference>
<dbReference type="GO" id="GO:0051539">
    <property type="term" value="F:4 iron, 4 sulfur cluster binding"/>
    <property type="evidence" value="ECO:0007669"/>
    <property type="project" value="UniProtKB-KW"/>
</dbReference>
<dbReference type="GO" id="GO:0016830">
    <property type="term" value="F:carbon-carbon lyase activity"/>
    <property type="evidence" value="ECO:0007669"/>
    <property type="project" value="InterPro"/>
</dbReference>
<dbReference type="GO" id="GO:0008270">
    <property type="term" value="F:zinc ion binding"/>
    <property type="evidence" value="ECO:0007669"/>
    <property type="project" value="UniProtKB-UniRule"/>
</dbReference>
<dbReference type="GO" id="GO:0009228">
    <property type="term" value="P:thiamine biosynthetic process"/>
    <property type="evidence" value="ECO:0007669"/>
    <property type="project" value="UniProtKB-KW"/>
</dbReference>
<dbReference type="GO" id="GO:0009229">
    <property type="term" value="P:thiamine diphosphate biosynthetic process"/>
    <property type="evidence" value="ECO:0007669"/>
    <property type="project" value="UniProtKB-UniRule"/>
</dbReference>
<dbReference type="FunFam" id="3.20.20.540:FF:000001">
    <property type="entry name" value="Phosphomethylpyrimidine synthase"/>
    <property type="match status" value="1"/>
</dbReference>
<dbReference type="Gene3D" id="6.10.250.620">
    <property type="match status" value="1"/>
</dbReference>
<dbReference type="Gene3D" id="3.20.20.540">
    <property type="entry name" value="Radical SAM ThiC family, central domain"/>
    <property type="match status" value="1"/>
</dbReference>
<dbReference type="HAMAP" id="MF_00089">
    <property type="entry name" value="ThiC"/>
    <property type="match status" value="1"/>
</dbReference>
<dbReference type="InterPro" id="IPR037509">
    <property type="entry name" value="ThiC"/>
</dbReference>
<dbReference type="InterPro" id="IPR025747">
    <property type="entry name" value="ThiC-associated_dom"/>
</dbReference>
<dbReference type="InterPro" id="IPR038521">
    <property type="entry name" value="ThiC/Bza_core_dom"/>
</dbReference>
<dbReference type="InterPro" id="IPR002817">
    <property type="entry name" value="ThiC/BzaA/B"/>
</dbReference>
<dbReference type="NCBIfam" id="NF006763">
    <property type="entry name" value="PRK09284.1"/>
    <property type="match status" value="1"/>
</dbReference>
<dbReference type="NCBIfam" id="NF009895">
    <property type="entry name" value="PRK13352.1"/>
    <property type="match status" value="1"/>
</dbReference>
<dbReference type="NCBIfam" id="TIGR00190">
    <property type="entry name" value="thiC"/>
    <property type="match status" value="1"/>
</dbReference>
<dbReference type="PANTHER" id="PTHR30557:SF1">
    <property type="entry name" value="PHOSPHOMETHYLPYRIMIDINE SYNTHASE, CHLOROPLASTIC"/>
    <property type="match status" value="1"/>
</dbReference>
<dbReference type="PANTHER" id="PTHR30557">
    <property type="entry name" value="THIAMINE BIOSYNTHESIS PROTEIN THIC"/>
    <property type="match status" value="1"/>
</dbReference>
<dbReference type="Pfam" id="PF13667">
    <property type="entry name" value="ThiC-associated"/>
    <property type="match status" value="1"/>
</dbReference>
<dbReference type="Pfam" id="PF01964">
    <property type="entry name" value="ThiC_Rad_SAM"/>
    <property type="match status" value="1"/>
</dbReference>
<dbReference type="SFLD" id="SFLDF00407">
    <property type="entry name" value="phosphomethylpyrimidine_syntha"/>
    <property type="match status" value="1"/>
</dbReference>
<dbReference type="SFLD" id="SFLDG01114">
    <property type="entry name" value="phosphomethylpyrimidine_syntha"/>
    <property type="match status" value="1"/>
</dbReference>
<dbReference type="SFLD" id="SFLDS00113">
    <property type="entry name" value="Radical_SAM_Phosphomethylpyrim"/>
    <property type="match status" value="1"/>
</dbReference>
<accession>Q02F45</accession>
<sequence>MSATQKNNITRLEQLDRQSTQPFPNSRKVYLTGSRPDIRVPVREISLADTPTAFGGEKNPPVFVYDTSGPYTDPEVRIDLRKGLPDVRSRWIDERGDTEILPGLTSEFGQARLADASLDALRFAHVRTPRRAKPGANVSQMHYAKKGIITPEMEYIAIRENMKLQEARAAGLLDQQHPGHSFGANTPKEITPEFVREEVARGRAIIPANINHTELEPMIIGRNFLVKINGNIGNSALGSSIEEEVEKLTWGIRWGADTVMDLSTGKHIHETREWILRNSPVPIGTVPIYQALEKVNGVAEDLTWEIFRDTLIEQAEQGVDYFTIHAGVLLRYVPLTAKRVTGIVSRGGSIMAKWCLAHHQENFLYTHFEEICEIMKAYDVSFSLGDGLRPGSVADANDAAQFGELETLGELTKIAWKHDVQVMIEGPGHVPMQLIKENMDKQLECCDEAPFYTLGPLTTDIAPGYDHITSGIGAAMIGWFGCAMLCYVTPKEHLGLPNKDDVKTGIITYKIAAHAADLAKGHPGAQIRDNALSKARFEFRWEDQFNLGLDPDTARAFHDETLPKDSAKVAHFCSMCGPKFCSMKITQEVRDYAKENGLSDESKAIEAGFQEQAARFKDEGSVIYRQV</sequence>
<reference key="1">
    <citation type="journal article" date="2006" name="Genome Biol.">
        <title>Genomic analysis reveals that Pseudomonas aeruginosa virulence is combinatorial.</title>
        <authorList>
            <person name="Lee D.G."/>
            <person name="Urbach J.M."/>
            <person name="Wu G."/>
            <person name="Liberati N.T."/>
            <person name="Feinbaum R.L."/>
            <person name="Miyata S."/>
            <person name="Diggins L.T."/>
            <person name="He J."/>
            <person name="Saucier M."/>
            <person name="Deziel E."/>
            <person name="Friedman L."/>
            <person name="Li L."/>
            <person name="Grills G."/>
            <person name="Montgomery K."/>
            <person name="Kucherlapati R."/>
            <person name="Rahme L.G."/>
            <person name="Ausubel F.M."/>
        </authorList>
    </citation>
    <scope>NUCLEOTIDE SEQUENCE [LARGE SCALE GENOMIC DNA]</scope>
    <source>
        <strain>UCBPP-PA14</strain>
    </source>
</reference>
<feature type="chain" id="PRO_1000004793" description="Phosphomethylpyrimidine synthase">
    <location>
        <begin position="1"/>
        <end position="627"/>
    </location>
</feature>
<feature type="region of interest" description="Disordered" evidence="2">
    <location>
        <begin position="1"/>
        <end position="29"/>
    </location>
</feature>
<feature type="compositionally biased region" description="Polar residues" evidence="2">
    <location>
        <begin position="1"/>
        <end position="24"/>
    </location>
</feature>
<feature type="binding site" evidence="1">
    <location>
        <position position="231"/>
    </location>
    <ligand>
        <name>substrate</name>
    </ligand>
</feature>
<feature type="binding site" evidence="1">
    <location>
        <position position="260"/>
    </location>
    <ligand>
        <name>substrate</name>
    </ligand>
</feature>
<feature type="binding site" evidence="1">
    <location>
        <position position="289"/>
    </location>
    <ligand>
        <name>substrate</name>
    </ligand>
</feature>
<feature type="binding site" evidence="1">
    <location>
        <position position="325"/>
    </location>
    <ligand>
        <name>substrate</name>
    </ligand>
</feature>
<feature type="binding site" evidence="1">
    <location>
        <begin position="345"/>
        <end position="347"/>
    </location>
    <ligand>
        <name>substrate</name>
    </ligand>
</feature>
<feature type="binding site" evidence="1">
    <location>
        <begin position="386"/>
        <end position="389"/>
    </location>
    <ligand>
        <name>substrate</name>
    </ligand>
</feature>
<feature type="binding site" evidence="1">
    <location>
        <position position="425"/>
    </location>
    <ligand>
        <name>substrate</name>
    </ligand>
</feature>
<feature type="binding site" evidence="1">
    <location>
        <position position="429"/>
    </location>
    <ligand>
        <name>Zn(2+)</name>
        <dbReference type="ChEBI" id="CHEBI:29105"/>
    </ligand>
</feature>
<feature type="binding site" evidence="1">
    <location>
        <position position="452"/>
    </location>
    <ligand>
        <name>substrate</name>
    </ligand>
</feature>
<feature type="binding site" evidence="1">
    <location>
        <position position="493"/>
    </location>
    <ligand>
        <name>Zn(2+)</name>
        <dbReference type="ChEBI" id="CHEBI:29105"/>
    </ligand>
</feature>
<feature type="binding site" evidence="1">
    <location>
        <position position="573"/>
    </location>
    <ligand>
        <name>[4Fe-4S] cluster</name>
        <dbReference type="ChEBI" id="CHEBI:49883"/>
        <note>4Fe-4S-S-AdoMet</note>
    </ligand>
</feature>
<feature type="binding site" evidence="1">
    <location>
        <position position="576"/>
    </location>
    <ligand>
        <name>[4Fe-4S] cluster</name>
        <dbReference type="ChEBI" id="CHEBI:49883"/>
        <note>4Fe-4S-S-AdoMet</note>
    </ligand>
</feature>
<feature type="binding site" evidence="1">
    <location>
        <position position="581"/>
    </location>
    <ligand>
        <name>[4Fe-4S] cluster</name>
        <dbReference type="ChEBI" id="CHEBI:49883"/>
        <note>4Fe-4S-S-AdoMet</note>
    </ligand>
</feature>
<protein>
    <recommendedName>
        <fullName evidence="1">Phosphomethylpyrimidine synthase</fullName>
        <ecNumber evidence="1">4.1.99.17</ecNumber>
    </recommendedName>
    <alternativeName>
        <fullName evidence="1">Hydroxymethylpyrimidine phosphate synthase</fullName>
        <shortName evidence="1">HMP-P synthase</shortName>
        <shortName evidence="1">HMP-phosphate synthase</shortName>
        <shortName evidence="1">HMPP synthase</shortName>
    </alternativeName>
    <alternativeName>
        <fullName evidence="1">Thiamine biosynthesis protein ThiC</fullName>
    </alternativeName>
</protein>
<proteinExistence type="inferred from homology"/>
<name>THIC_PSEAB</name>
<keyword id="KW-0004">4Fe-4S</keyword>
<keyword id="KW-0408">Iron</keyword>
<keyword id="KW-0411">Iron-sulfur</keyword>
<keyword id="KW-0456">Lyase</keyword>
<keyword id="KW-0479">Metal-binding</keyword>
<keyword id="KW-0949">S-adenosyl-L-methionine</keyword>
<keyword id="KW-0784">Thiamine biosynthesis</keyword>
<keyword id="KW-0862">Zinc</keyword>
<comment type="function">
    <text evidence="1">Catalyzes the synthesis of the hydroxymethylpyrimidine phosphate (HMP-P) moiety of thiamine from aminoimidazole ribotide (AIR) in a radical S-adenosyl-L-methionine (SAM)-dependent reaction.</text>
</comment>
<comment type="catalytic activity">
    <reaction evidence="1">
        <text>5-amino-1-(5-phospho-beta-D-ribosyl)imidazole + S-adenosyl-L-methionine = 4-amino-2-methyl-5-(phosphooxymethyl)pyrimidine + CO + 5'-deoxyadenosine + formate + L-methionine + 3 H(+)</text>
        <dbReference type="Rhea" id="RHEA:24840"/>
        <dbReference type="ChEBI" id="CHEBI:15378"/>
        <dbReference type="ChEBI" id="CHEBI:15740"/>
        <dbReference type="ChEBI" id="CHEBI:17245"/>
        <dbReference type="ChEBI" id="CHEBI:17319"/>
        <dbReference type="ChEBI" id="CHEBI:57844"/>
        <dbReference type="ChEBI" id="CHEBI:58354"/>
        <dbReference type="ChEBI" id="CHEBI:59789"/>
        <dbReference type="ChEBI" id="CHEBI:137981"/>
        <dbReference type="EC" id="4.1.99.17"/>
    </reaction>
</comment>
<comment type="cofactor">
    <cofactor evidence="1">
        <name>[4Fe-4S] cluster</name>
        <dbReference type="ChEBI" id="CHEBI:49883"/>
    </cofactor>
    <text evidence="1">Binds 1 [4Fe-4S] cluster per subunit. The cluster is coordinated with 3 cysteines and an exchangeable S-adenosyl-L-methionine.</text>
</comment>
<comment type="pathway">
    <text evidence="1">Cofactor biosynthesis; thiamine diphosphate biosynthesis.</text>
</comment>
<comment type="subunit">
    <text evidence="1">Homodimer.</text>
</comment>
<comment type="similarity">
    <text evidence="1">Belongs to the ThiC family.</text>
</comment>
<gene>
    <name evidence="1" type="primary">thiC</name>
    <name type="ordered locus">PA14_65740</name>
</gene>